<protein>
    <recommendedName>
        <fullName evidence="1">Protein-export protein SecB</fullName>
    </recommendedName>
</protein>
<feature type="chain" id="PRO_1000083853" description="Protein-export protein SecB">
    <location>
        <begin position="1"/>
        <end position="163"/>
    </location>
</feature>
<organism>
    <name type="scientific">Brucella suis (strain ATCC 23445 / NCTC 10510)</name>
    <dbReference type="NCBI Taxonomy" id="470137"/>
    <lineage>
        <taxon>Bacteria</taxon>
        <taxon>Pseudomonadati</taxon>
        <taxon>Pseudomonadota</taxon>
        <taxon>Alphaproteobacteria</taxon>
        <taxon>Hyphomicrobiales</taxon>
        <taxon>Brucellaceae</taxon>
        <taxon>Brucella/Ochrobactrum group</taxon>
        <taxon>Brucella</taxon>
    </lineage>
</organism>
<name>SECB_BRUSI</name>
<keyword id="KW-0143">Chaperone</keyword>
<keyword id="KW-0963">Cytoplasm</keyword>
<keyword id="KW-0653">Protein transport</keyword>
<keyword id="KW-0811">Translocation</keyword>
<keyword id="KW-0813">Transport</keyword>
<evidence type="ECO:0000255" key="1">
    <source>
        <dbReference type="HAMAP-Rule" id="MF_00821"/>
    </source>
</evidence>
<dbReference type="EMBL" id="CP000911">
    <property type="protein sequence ID" value="ABY38924.1"/>
    <property type="molecule type" value="Genomic_DNA"/>
</dbReference>
<dbReference type="RefSeq" id="WP_002965136.1">
    <property type="nucleotide sequence ID" value="NC_010169.1"/>
</dbReference>
<dbReference type="SMR" id="B0CJH2"/>
<dbReference type="GeneID" id="97534666"/>
<dbReference type="KEGG" id="bmt:BSUIS_A1913"/>
<dbReference type="HOGENOM" id="CLU_111574_0_0_5"/>
<dbReference type="Proteomes" id="UP000008545">
    <property type="component" value="Chromosome I"/>
</dbReference>
<dbReference type="GO" id="GO:0005737">
    <property type="term" value="C:cytoplasm"/>
    <property type="evidence" value="ECO:0007669"/>
    <property type="project" value="UniProtKB-SubCell"/>
</dbReference>
<dbReference type="GO" id="GO:0051082">
    <property type="term" value="F:unfolded protein binding"/>
    <property type="evidence" value="ECO:0007669"/>
    <property type="project" value="InterPro"/>
</dbReference>
<dbReference type="GO" id="GO:0006457">
    <property type="term" value="P:protein folding"/>
    <property type="evidence" value="ECO:0007669"/>
    <property type="project" value="UniProtKB-UniRule"/>
</dbReference>
<dbReference type="GO" id="GO:0051262">
    <property type="term" value="P:protein tetramerization"/>
    <property type="evidence" value="ECO:0007669"/>
    <property type="project" value="InterPro"/>
</dbReference>
<dbReference type="GO" id="GO:0015031">
    <property type="term" value="P:protein transport"/>
    <property type="evidence" value="ECO:0007669"/>
    <property type="project" value="UniProtKB-UniRule"/>
</dbReference>
<dbReference type="Gene3D" id="3.10.420.10">
    <property type="entry name" value="SecB-like"/>
    <property type="match status" value="1"/>
</dbReference>
<dbReference type="HAMAP" id="MF_00821">
    <property type="entry name" value="SecB"/>
    <property type="match status" value="1"/>
</dbReference>
<dbReference type="InterPro" id="IPR003708">
    <property type="entry name" value="SecB"/>
</dbReference>
<dbReference type="InterPro" id="IPR035958">
    <property type="entry name" value="SecB-like_sf"/>
</dbReference>
<dbReference type="NCBIfam" id="NF004392">
    <property type="entry name" value="PRK05751.1-3"/>
    <property type="match status" value="1"/>
</dbReference>
<dbReference type="NCBIfam" id="TIGR00809">
    <property type="entry name" value="secB"/>
    <property type="match status" value="1"/>
</dbReference>
<dbReference type="PANTHER" id="PTHR36918">
    <property type="match status" value="1"/>
</dbReference>
<dbReference type="PANTHER" id="PTHR36918:SF1">
    <property type="entry name" value="PROTEIN-EXPORT PROTEIN SECB"/>
    <property type="match status" value="1"/>
</dbReference>
<dbReference type="Pfam" id="PF02556">
    <property type="entry name" value="SecB"/>
    <property type="match status" value="1"/>
</dbReference>
<dbReference type="PRINTS" id="PR01594">
    <property type="entry name" value="SECBCHAPRONE"/>
</dbReference>
<dbReference type="SUPFAM" id="SSF54611">
    <property type="entry name" value="SecB-like"/>
    <property type="match status" value="1"/>
</dbReference>
<comment type="function">
    <text evidence="1">One of the proteins required for the normal export of preproteins out of the cell cytoplasm. It is a molecular chaperone that binds to a subset of precursor proteins, maintaining them in a translocation-competent state. It also specifically binds to its receptor SecA.</text>
</comment>
<comment type="subunit">
    <text evidence="1">Homotetramer, a dimer of dimers. One homotetramer interacts with 1 SecA dimer.</text>
</comment>
<comment type="subcellular location">
    <subcellularLocation>
        <location evidence="1">Cytoplasm</location>
    </subcellularLocation>
</comment>
<comment type="similarity">
    <text evidence="1">Belongs to the SecB family.</text>
</comment>
<gene>
    <name evidence="1" type="primary">secB</name>
    <name type="ordered locus">BSUIS_A1913</name>
</gene>
<accession>B0CJH2</accession>
<proteinExistence type="inferred from homology"/>
<reference key="1">
    <citation type="submission" date="2007-12" db="EMBL/GenBank/DDBJ databases">
        <title>Brucella suis ATCC 23445 whole genome shotgun sequencing project.</title>
        <authorList>
            <person name="Setubal J.C."/>
            <person name="Bowns C."/>
            <person name="Boyle S."/>
            <person name="Crasta O.R."/>
            <person name="Czar M.J."/>
            <person name="Dharmanolla C."/>
            <person name="Gillespie J.J."/>
            <person name="Kenyon R.W."/>
            <person name="Lu J."/>
            <person name="Mane S."/>
            <person name="Mohapatra S."/>
            <person name="Nagrani S."/>
            <person name="Purkayastha A."/>
            <person name="Rajasimha H.K."/>
            <person name="Shallom J.M."/>
            <person name="Shallom S."/>
            <person name="Shukla M."/>
            <person name="Snyder E.E."/>
            <person name="Sobral B.W."/>
            <person name="Wattam A.R."/>
            <person name="Will R."/>
            <person name="Williams K."/>
            <person name="Yoo H."/>
            <person name="Bruce D."/>
            <person name="Detter C."/>
            <person name="Munk C."/>
            <person name="Brettin T.S."/>
        </authorList>
    </citation>
    <scope>NUCLEOTIDE SEQUENCE [LARGE SCALE GENOMIC DNA]</scope>
    <source>
        <strain>ATCC 23445 / NCTC 10510</strain>
    </source>
</reference>
<sequence>MSDKAAGETKNGNGATTEPSLNILAQYVKDLSFESPGAPLSLRPREKAPSININVNVNANPLSETDFDVVLTLEAKAVDGKDILFNTELVYGGVFRIQGIPQEHMLPLLFIECPRLLFPFARQIIADATRNGGYPPLMIDPIDFAQMFQQRMAEEQAKSAVKS</sequence>